<evidence type="ECO:0000255" key="1">
    <source>
        <dbReference type="HAMAP-Rule" id="MF_00406"/>
    </source>
</evidence>
<evidence type="ECO:0000305" key="2"/>
<comment type="function">
    <text evidence="1">Involved in unsaturated fatty acids biosynthesis. Catalyzes the dehydration of short chain beta-hydroxyacyl-ACPs and long chain saturated and unsaturated beta-hydroxyacyl-ACPs.</text>
</comment>
<comment type="catalytic activity">
    <reaction evidence="1">
        <text>a (3R)-hydroxyacyl-[ACP] = a (2E)-enoyl-[ACP] + H2O</text>
        <dbReference type="Rhea" id="RHEA:13097"/>
        <dbReference type="Rhea" id="RHEA-COMP:9925"/>
        <dbReference type="Rhea" id="RHEA-COMP:9945"/>
        <dbReference type="ChEBI" id="CHEBI:15377"/>
        <dbReference type="ChEBI" id="CHEBI:78784"/>
        <dbReference type="ChEBI" id="CHEBI:78827"/>
        <dbReference type="EC" id="4.2.1.59"/>
    </reaction>
</comment>
<comment type="subcellular location">
    <subcellularLocation>
        <location evidence="1">Cytoplasm</location>
    </subcellularLocation>
</comment>
<comment type="similarity">
    <text evidence="1">Belongs to the thioester dehydratase family. FabZ subfamily.</text>
</comment>
<comment type="sequence caution" evidence="2">
    <conflict type="erroneous initiation">
        <sequence resource="EMBL-CDS" id="CAG68247"/>
    </conflict>
</comment>
<keyword id="KW-0963">Cytoplasm</keyword>
<keyword id="KW-0441">Lipid A biosynthesis</keyword>
<keyword id="KW-0444">Lipid biosynthesis</keyword>
<keyword id="KW-0443">Lipid metabolism</keyword>
<keyword id="KW-0456">Lyase</keyword>
<accession>Q6FCG4</accession>
<sequence length="148" mass="16627">MPMDIQKIREYLPHRYPFLLVDRVVEVGENNIVGYKNVSINEEFFQGHFPDYPIMPGVLIVEALAQISGILGFIMNNETPKPGSLFLFAGAEKVRFKKQVVAGDQLVLKAELVMQKRGIYKYNCTATVDGKVATTAEIIVSHLRTEQA</sequence>
<dbReference type="EC" id="4.2.1.59" evidence="1"/>
<dbReference type="EMBL" id="CR543861">
    <property type="protein sequence ID" value="CAG68247.1"/>
    <property type="status" value="ALT_INIT"/>
    <property type="molecule type" value="Genomic_DNA"/>
</dbReference>
<dbReference type="SMR" id="Q6FCG4"/>
<dbReference type="STRING" id="202950.GCA_001485005_01138"/>
<dbReference type="KEGG" id="aci:ACIAD1381"/>
<dbReference type="eggNOG" id="COG0764">
    <property type="taxonomic scope" value="Bacteria"/>
</dbReference>
<dbReference type="HOGENOM" id="CLU_078912_1_2_6"/>
<dbReference type="Proteomes" id="UP000000430">
    <property type="component" value="Chromosome"/>
</dbReference>
<dbReference type="GO" id="GO:0005737">
    <property type="term" value="C:cytoplasm"/>
    <property type="evidence" value="ECO:0007669"/>
    <property type="project" value="UniProtKB-SubCell"/>
</dbReference>
<dbReference type="GO" id="GO:0016020">
    <property type="term" value="C:membrane"/>
    <property type="evidence" value="ECO:0007669"/>
    <property type="project" value="GOC"/>
</dbReference>
<dbReference type="GO" id="GO:0019171">
    <property type="term" value="F:(3R)-hydroxyacyl-[acyl-carrier-protein] dehydratase activity"/>
    <property type="evidence" value="ECO:0007669"/>
    <property type="project" value="UniProtKB-EC"/>
</dbReference>
<dbReference type="GO" id="GO:0006633">
    <property type="term" value="P:fatty acid biosynthetic process"/>
    <property type="evidence" value="ECO:0007669"/>
    <property type="project" value="UniProtKB-UniRule"/>
</dbReference>
<dbReference type="GO" id="GO:0009245">
    <property type="term" value="P:lipid A biosynthetic process"/>
    <property type="evidence" value="ECO:0007669"/>
    <property type="project" value="UniProtKB-UniRule"/>
</dbReference>
<dbReference type="CDD" id="cd01288">
    <property type="entry name" value="FabZ"/>
    <property type="match status" value="1"/>
</dbReference>
<dbReference type="FunFam" id="3.10.129.10:FF:000001">
    <property type="entry name" value="3-hydroxyacyl-[acyl-carrier-protein] dehydratase FabZ"/>
    <property type="match status" value="1"/>
</dbReference>
<dbReference type="Gene3D" id="3.10.129.10">
    <property type="entry name" value="Hotdog Thioesterase"/>
    <property type="match status" value="1"/>
</dbReference>
<dbReference type="HAMAP" id="MF_00406">
    <property type="entry name" value="FabZ"/>
    <property type="match status" value="1"/>
</dbReference>
<dbReference type="InterPro" id="IPR013114">
    <property type="entry name" value="FabA_FabZ"/>
</dbReference>
<dbReference type="InterPro" id="IPR010084">
    <property type="entry name" value="FabZ"/>
</dbReference>
<dbReference type="InterPro" id="IPR029069">
    <property type="entry name" value="HotDog_dom_sf"/>
</dbReference>
<dbReference type="NCBIfam" id="TIGR01750">
    <property type="entry name" value="fabZ"/>
    <property type="match status" value="1"/>
</dbReference>
<dbReference type="NCBIfam" id="NF000582">
    <property type="entry name" value="PRK00006.1"/>
    <property type="match status" value="1"/>
</dbReference>
<dbReference type="PANTHER" id="PTHR30272">
    <property type="entry name" value="3-HYDROXYACYL-[ACYL-CARRIER-PROTEIN] DEHYDRATASE"/>
    <property type="match status" value="1"/>
</dbReference>
<dbReference type="PANTHER" id="PTHR30272:SF1">
    <property type="entry name" value="3-HYDROXYACYL-[ACYL-CARRIER-PROTEIN] DEHYDRATASE"/>
    <property type="match status" value="1"/>
</dbReference>
<dbReference type="Pfam" id="PF07977">
    <property type="entry name" value="FabA"/>
    <property type="match status" value="1"/>
</dbReference>
<dbReference type="SUPFAM" id="SSF54637">
    <property type="entry name" value="Thioesterase/thiol ester dehydrase-isomerase"/>
    <property type="match status" value="1"/>
</dbReference>
<organism>
    <name type="scientific">Acinetobacter baylyi (strain ATCC 33305 / BD413 / ADP1)</name>
    <dbReference type="NCBI Taxonomy" id="62977"/>
    <lineage>
        <taxon>Bacteria</taxon>
        <taxon>Pseudomonadati</taxon>
        <taxon>Pseudomonadota</taxon>
        <taxon>Gammaproteobacteria</taxon>
        <taxon>Moraxellales</taxon>
        <taxon>Moraxellaceae</taxon>
        <taxon>Acinetobacter</taxon>
    </lineage>
</organism>
<reference key="1">
    <citation type="journal article" date="2004" name="Nucleic Acids Res.">
        <title>Unique features revealed by the genome sequence of Acinetobacter sp. ADP1, a versatile and naturally transformation competent bacterium.</title>
        <authorList>
            <person name="Barbe V."/>
            <person name="Vallenet D."/>
            <person name="Fonknechten N."/>
            <person name="Kreimeyer A."/>
            <person name="Oztas S."/>
            <person name="Labarre L."/>
            <person name="Cruveiller S."/>
            <person name="Robert C."/>
            <person name="Duprat S."/>
            <person name="Wincker P."/>
            <person name="Ornston L.N."/>
            <person name="Weissenbach J."/>
            <person name="Marliere P."/>
            <person name="Cohen G.N."/>
            <person name="Medigue C."/>
        </authorList>
    </citation>
    <scope>NUCLEOTIDE SEQUENCE [LARGE SCALE GENOMIC DNA]</scope>
    <source>
        <strain>ATCC 33305 / BD413 / ADP1</strain>
    </source>
</reference>
<gene>
    <name evidence="1" type="primary">fabZ</name>
    <name type="ordered locus">ACIAD1381</name>
</gene>
<feature type="chain" id="PRO_0000091628" description="3-hydroxyacyl-[acyl-carrier-protein] dehydratase FabZ">
    <location>
        <begin position="1"/>
        <end position="148"/>
    </location>
</feature>
<feature type="active site" evidence="1">
    <location>
        <position position="48"/>
    </location>
</feature>
<name>FABZ_ACIAD</name>
<protein>
    <recommendedName>
        <fullName evidence="1">3-hydroxyacyl-[acyl-carrier-protein] dehydratase FabZ</fullName>
        <ecNumber evidence="1">4.2.1.59</ecNumber>
    </recommendedName>
    <alternativeName>
        <fullName evidence="1">(3R)-hydroxymyristoyl-[acyl-carrier-protein] dehydratase</fullName>
        <shortName evidence="1">(3R)-hydroxymyristoyl-ACP dehydrase</shortName>
    </alternativeName>
    <alternativeName>
        <fullName evidence="1">Beta-hydroxyacyl-ACP dehydratase</fullName>
    </alternativeName>
</protein>
<proteinExistence type="inferred from homology"/>